<keyword id="KW-1003">Cell membrane</keyword>
<keyword id="KW-0217">Developmental protein</keyword>
<keyword id="KW-0221">Differentiation</keyword>
<keyword id="KW-0325">Glycoprotein</keyword>
<keyword id="KW-0472">Membrane</keyword>
<keyword id="KW-0524">Neurogenesis</keyword>
<keyword id="KW-0892">Osteogenesis</keyword>
<keyword id="KW-0597">Phosphoprotein</keyword>
<keyword id="KW-0653">Protein transport</keyword>
<keyword id="KW-1185">Reference proteome</keyword>
<keyword id="KW-0812">Transmembrane</keyword>
<keyword id="KW-1133">Transmembrane helix</keyword>
<keyword id="KW-0813">Transport</keyword>
<dbReference type="EMBL" id="CR860697">
    <property type="protein sequence ID" value="CAH92813.1"/>
    <property type="molecule type" value="mRNA"/>
</dbReference>
<dbReference type="RefSeq" id="NP_001126642.1">
    <property type="nucleotide sequence ID" value="NM_001133170.1"/>
</dbReference>
<dbReference type="SMR" id="Q5R603"/>
<dbReference type="FunCoup" id="Q5R603">
    <property type="interactions" value="433"/>
</dbReference>
<dbReference type="GlyCosmos" id="Q5R603">
    <property type="glycosylation" value="2 sites, No reported glycans"/>
</dbReference>
<dbReference type="GeneID" id="100173640"/>
<dbReference type="KEGG" id="pon:100173640"/>
<dbReference type="CTD" id="2824"/>
<dbReference type="InParanoid" id="Q5R603"/>
<dbReference type="OrthoDB" id="9993736at2759"/>
<dbReference type="Proteomes" id="UP000001595">
    <property type="component" value="Unplaced"/>
</dbReference>
<dbReference type="GO" id="GO:0045121">
    <property type="term" value="C:membrane raft"/>
    <property type="evidence" value="ECO:0000250"/>
    <property type="project" value="UniProtKB"/>
</dbReference>
<dbReference type="GO" id="GO:0043209">
    <property type="term" value="C:myelin sheath"/>
    <property type="evidence" value="ECO:0007669"/>
    <property type="project" value="TreeGrafter"/>
</dbReference>
<dbReference type="GO" id="GO:0005886">
    <property type="term" value="C:plasma membrane"/>
    <property type="evidence" value="ECO:0000250"/>
    <property type="project" value="UniProtKB"/>
</dbReference>
<dbReference type="GO" id="GO:0019911">
    <property type="term" value="F:structural constituent of myelin sheath"/>
    <property type="evidence" value="ECO:0007669"/>
    <property type="project" value="TreeGrafter"/>
</dbReference>
<dbReference type="GO" id="GO:0061564">
    <property type="term" value="P:axon development"/>
    <property type="evidence" value="ECO:0007669"/>
    <property type="project" value="TreeGrafter"/>
</dbReference>
<dbReference type="GO" id="GO:0022010">
    <property type="term" value="P:central nervous system myelination"/>
    <property type="evidence" value="ECO:0007669"/>
    <property type="project" value="TreeGrafter"/>
</dbReference>
<dbReference type="GO" id="GO:0085029">
    <property type="term" value="P:extracellular matrix assembly"/>
    <property type="evidence" value="ECO:0000250"/>
    <property type="project" value="UniProtKB"/>
</dbReference>
<dbReference type="GO" id="GO:2000009">
    <property type="term" value="P:negative regulation of protein localization to cell surface"/>
    <property type="evidence" value="ECO:0000250"/>
    <property type="project" value="UniProtKB"/>
</dbReference>
<dbReference type="GO" id="GO:0051612">
    <property type="term" value="P:negative regulation of serotonin uptake"/>
    <property type="evidence" value="ECO:0000250"/>
    <property type="project" value="UniProtKB"/>
</dbReference>
<dbReference type="GO" id="GO:0001503">
    <property type="term" value="P:ossification"/>
    <property type="evidence" value="ECO:0007669"/>
    <property type="project" value="UniProtKB-KW"/>
</dbReference>
<dbReference type="GO" id="GO:0030501">
    <property type="term" value="P:positive regulation of bone mineralization"/>
    <property type="evidence" value="ECO:0000250"/>
    <property type="project" value="UniProtKB"/>
</dbReference>
<dbReference type="GO" id="GO:0015031">
    <property type="term" value="P:protein transport"/>
    <property type="evidence" value="ECO:0007669"/>
    <property type="project" value="UniProtKB-KW"/>
</dbReference>
<dbReference type="GO" id="GO:0032956">
    <property type="term" value="P:regulation of actin cytoskeleton organization"/>
    <property type="evidence" value="ECO:0000250"/>
    <property type="project" value="UniProtKB"/>
</dbReference>
<dbReference type="GO" id="GO:0051893">
    <property type="term" value="P:regulation of focal adhesion assembly"/>
    <property type="evidence" value="ECO:0000250"/>
    <property type="project" value="UniProtKB"/>
</dbReference>
<dbReference type="InterPro" id="IPR001614">
    <property type="entry name" value="Myelin_PLP"/>
</dbReference>
<dbReference type="InterPro" id="IPR018237">
    <property type="entry name" value="Myelin_PLP_CS"/>
</dbReference>
<dbReference type="PANTHER" id="PTHR11683">
    <property type="entry name" value="MYELIN PROTEOLIPID"/>
    <property type="match status" value="1"/>
</dbReference>
<dbReference type="PANTHER" id="PTHR11683:SF10">
    <property type="entry name" value="NEURONAL MEMBRANE GLYCOPROTEIN M6-B"/>
    <property type="match status" value="1"/>
</dbReference>
<dbReference type="Pfam" id="PF01275">
    <property type="entry name" value="Myelin_PLP"/>
    <property type="match status" value="1"/>
</dbReference>
<dbReference type="PRINTS" id="PR00214">
    <property type="entry name" value="MYELINPLP"/>
</dbReference>
<dbReference type="SMART" id="SM00002">
    <property type="entry name" value="PLP"/>
    <property type="match status" value="1"/>
</dbReference>
<dbReference type="PROSITE" id="PS00575">
    <property type="entry name" value="MYELIN_PLP_1"/>
    <property type="match status" value="1"/>
</dbReference>
<dbReference type="PROSITE" id="PS01004">
    <property type="entry name" value="MYELIN_PLP_2"/>
    <property type="match status" value="1"/>
</dbReference>
<protein>
    <recommendedName>
        <fullName>Neuronal membrane glycoprotein M6-b</fullName>
        <shortName>M6b</shortName>
    </recommendedName>
</protein>
<accession>Q5R603</accession>
<organism>
    <name type="scientific">Pongo abelii</name>
    <name type="common">Sumatran orangutan</name>
    <name type="synonym">Pongo pygmaeus abelii</name>
    <dbReference type="NCBI Taxonomy" id="9601"/>
    <lineage>
        <taxon>Eukaryota</taxon>
        <taxon>Metazoa</taxon>
        <taxon>Chordata</taxon>
        <taxon>Craniata</taxon>
        <taxon>Vertebrata</taxon>
        <taxon>Euteleostomi</taxon>
        <taxon>Mammalia</taxon>
        <taxon>Eutheria</taxon>
        <taxon>Euarchontoglires</taxon>
        <taxon>Primates</taxon>
        <taxon>Haplorrhini</taxon>
        <taxon>Catarrhini</taxon>
        <taxon>Hominidae</taxon>
        <taxon>Pongo</taxon>
    </lineage>
</organism>
<proteinExistence type="evidence at transcript level"/>
<comment type="function">
    <text evidence="1">May be involved in neural development. Involved in regulation of osteoblast function and bone formation. Involved in matrix vesicle release by osteoblasts; this function seems to involve maintenance of the actin cytoskeleton. May be involved in cellular trafficking of SERT and thereby in regulation of serotonin uptake (By similarity).</text>
</comment>
<comment type="subunit">
    <text evidence="1">Interacts with SERT.</text>
</comment>
<comment type="subcellular location">
    <subcellularLocation>
        <location evidence="1">Membrane</location>
        <topology evidence="1">Multi-pass membrane protein</topology>
    </subcellularLocation>
    <subcellularLocation>
        <location evidence="1">Cell membrane</location>
    </subcellularLocation>
    <text evidence="1">Colocalizes with SERT at the plasma membrane.</text>
</comment>
<comment type="similarity">
    <text evidence="4">Belongs to the myelin proteolipid protein family.</text>
</comment>
<reference key="1">
    <citation type="submission" date="2004-11" db="EMBL/GenBank/DDBJ databases">
        <authorList>
            <consortium name="The German cDNA consortium"/>
        </authorList>
    </citation>
    <scope>NUCLEOTIDE SEQUENCE [LARGE SCALE MRNA]</scope>
    <source>
        <tissue>Brain cortex</tissue>
    </source>
</reference>
<feature type="chain" id="PRO_0000159023" description="Neuronal membrane glycoprotein M6-b">
    <location>
        <begin position="1"/>
        <end position="265"/>
    </location>
</feature>
<feature type="transmembrane region" description="Helical" evidence="3">
    <location>
        <begin position="31"/>
        <end position="51"/>
    </location>
</feature>
<feature type="transmembrane region" description="Helical" evidence="3">
    <location>
        <begin position="90"/>
        <end position="110"/>
    </location>
</feature>
<feature type="transmembrane region" description="Helical" evidence="3">
    <location>
        <begin position="136"/>
        <end position="156"/>
    </location>
</feature>
<feature type="transmembrane region" description="Helical" evidence="3">
    <location>
        <begin position="224"/>
        <end position="244"/>
    </location>
</feature>
<feature type="modified residue" description="Phosphoserine" evidence="2">
    <location>
        <position position="257"/>
    </location>
</feature>
<feature type="glycosylation site" description="N-linked (GlcNAc...) asparagine" evidence="3">
    <location>
        <position position="73"/>
    </location>
</feature>
<feature type="glycosylation site" description="N-linked (GlcNAc...) asparagine" evidence="3">
    <location>
        <position position="177"/>
    </location>
</feature>
<evidence type="ECO:0000250" key="1"/>
<evidence type="ECO:0000250" key="2">
    <source>
        <dbReference type="UniProtKB" id="P35803"/>
    </source>
</evidence>
<evidence type="ECO:0000255" key="3"/>
<evidence type="ECO:0000305" key="4"/>
<sequence length="265" mass="29030">MKPAMETAAEENTEQSQKRKGCFECCIKCLGGVPYASLVATILCFSGVALFCGCGHVALAGTVAILEQHFSTNASDHALLSEVIQLMQYVIYGIASFFFLYVIILLAEGFYTTSAVKELHGEFKTTACGRCISGMFVFLTYVLGVAWLGVFGFSAVPVFMFYNIWSTCEVIKSPQTNGTTGVEQICVDIRQYGIIPWNAFPGKICGSALENICNTNEFYMSYHLFIVACAGAGATVIALLIYMMATTYNYAVLKFKSREDCCTKF</sequence>
<gene>
    <name type="primary">GPM6B</name>
    <name type="synonym">M6B</name>
</gene>
<name>GPM6B_PONAB</name>